<comment type="similarity">
    <text evidence="1">Belongs to the UPF0173 family.</text>
</comment>
<keyword id="KW-0378">Hydrolase</keyword>
<keyword id="KW-1185">Reference proteome</keyword>
<sequence length="226" mass="24983">MDLTYFGHSTFQIETEDVTLLFDPFFEENPHTETDPGTLAPDVLLITHAHFDHFSDVEAVLEASDPLVISNFEITQYVQEEYGHDAIQPLNEGGSVEFDWGYVESTHARHSSSFPDGSYGGVPNGFVLELGDDVVYNTGDTAPFAEMKWVGDLWDVDVMLAPVGNVFTMGIYGALHSTEMVEPELVIPLHYDTFPPLETDLDAFEDAFDEAGYDTRVFGAGETAAL</sequence>
<name>Y1937_SALRD</name>
<evidence type="ECO:0000255" key="1">
    <source>
        <dbReference type="HAMAP-Rule" id="MF_00457"/>
    </source>
</evidence>
<accession>Q2S184</accession>
<dbReference type="EMBL" id="CP000159">
    <property type="protein sequence ID" value="ABC45159.1"/>
    <property type="molecule type" value="Genomic_DNA"/>
</dbReference>
<dbReference type="RefSeq" id="WP_011404672.1">
    <property type="nucleotide sequence ID" value="NC_007677.1"/>
</dbReference>
<dbReference type="RefSeq" id="YP_446047.1">
    <property type="nucleotide sequence ID" value="NC_007677.1"/>
</dbReference>
<dbReference type="SMR" id="Q2S184"/>
<dbReference type="STRING" id="309807.SRU_1937"/>
<dbReference type="EnsemblBacteria" id="ABC45159">
    <property type="protein sequence ID" value="ABC45159"/>
    <property type="gene ID" value="SRU_1937"/>
</dbReference>
<dbReference type="KEGG" id="sru:SRU_1937"/>
<dbReference type="eggNOG" id="COG2220">
    <property type="taxonomic scope" value="Bacteria"/>
</dbReference>
<dbReference type="HOGENOM" id="CLU_070010_4_0_10"/>
<dbReference type="OrthoDB" id="9789133at2"/>
<dbReference type="Proteomes" id="UP000008674">
    <property type="component" value="Chromosome"/>
</dbReference>
<dbReference type="GO" id="GO:0016787">
    <property type="term" value="F:hydrolase activity"/>
    <property type="evidence" value="ECO:0007669"/>
    <property type="project" value="UniProtKB-UniRule"/>
</dbReference>
<dbReference type="Gene3D" id="3.60.15.10">
    <property type="entry name" value="Ribonuclease Z/Hydroxyacylglutathione hydrolase-like"/>
    <property type="match status" value="1"/>
</dbReference>
<dbReference type="HAMAP" id="MF_00457">
    <property type="entry name" value="UPF0173"/>
    <property type="match status" value="1"/>
</dbReference>
<dbReference type="InterPro" id="IPR001279">
    <property type="entry name" value="Metallo-B-lactamas"/>
</dbReference>
<dbReference type="InterPro" id="IPR036866">
    <property type="entry name" value="RibonucZ/Hydroxyglut_hydro"/>
</dbReference>
<dbReference type="InterPro" id="IPR022877">
    <property type="entry name" value="UPF0173"/>
</dbReference>
<dbReference type="InterPro" id="IPR050114">
    <property type="entry name" value="UPF0173_UPF0282_UlaG_hydrolase"/>
</dbReference>
<dbReference type="NCBIfam" id="NF001911">
    <property type="entry name" value="PRK00685.1"/>
    <property type="match status" value="1"/>
</dbReference>
<dbReference type="PANTHER" id="PTHR43546:SF3">
    <property type="entry name" value="UPF0173 METAL-DEPENDENT HYDROLASE MJ1163"/>
    <property type="match status" value="1"/>
</dbReference>
<dbReference type="PANTHER" id="PTHR43546">
    <property type="entry name" value="UPF0173 METAL-DEPENDENT HYDROLASE MJ1163-RELATED"/>
    <property type="match status" value="1"/>
</dbReference>
<dbReference type="Pfam" id="PF13483">
    <property type="entry name" value="Lactamase_B_3"/>
    <property type="match status" value="1"/>
</dbReference>
<dbReference type="SMART" id="SM00849">
    <property type="entry name" value="Lactamase_B"/>
    <property type="match status" value="1"/>
</dbReference>
<dbReference type="SUPFAM" id="SSF56281">
    <property type="entry name" value="Metallo-hydrolase/oxidoreductase"/>
    <property type="match status" value="1"/>
</dbReference>
<organism>
    <name type="scientific">Salinibacter ruber (strain DSM 13855 / M31)</name>
    <dbReference type="NCBI Taxonomy" id="309807"/>
    <lineage>
        <taxon>Bacteria</taxon>
        <taxon>Pseudomonadati</taxon>
        <taxon>Rhodothermota</taxon>
        <taxon>Rhodothermia</taxon>
        <taxon>Rhodothermales</taxon>
        <taxon>Salinibacteraceae</taxon>
        <taxon>Salinibacter</taxon>
    </lineage>
</organism>
<protein>
    <recommendedName>
        <fullName evidence="1">UPF0173 metal-dependent hydrolase SRU_1937</fullName>
    </recommendedName>
</protein>
<feature type="chain" id="PRO_0000367214" description="UPF0173 metal-dependent hydrolase SRU_1937">
    <location>
        <begin position="1"/>
        <end position="226"/>
    </location>
</feature>
<reference key="1">
    <citation type="journal article" date="2005" name="Proc. Natl. Acad. Sci. U.S.A.">
        <title>The genome of Salinibacter ruber: convergence and gene exchange among hyperhalophilic bacteria and archaea.</title>
        <authorList>
            <person name="Mongodin E.F."/>
            <person name="Nelson K.E."/>
            <person name="Daugherty S."/>
            <person name="DeBoy R.T."/>
            <person name="Wister J."/>
            <person name="Khouri H."/>
            <person name="Weidman J."/>
            <person name="Walsh D.A."/>
            <person name="Papke R.T."/>
            <person name="Sanchez Perez G."/>
            <person name="Sharma A.K."/>
            <person name="Nesbo C.L."/>
            <person name="MacLeod D."/>
            <person name="Bapteste E."/>
            <person name="Doolittle W.F."/>
            <person name="Charlebois R.L."/>
            <person name="Legault B."/>
            <person name="Rodriguez-Valera F."/>
        </authorList>
    </citation>
    <scope>NUCLEOTIDE SEQUENCE [LARGE SCALE GENOMIC DNA]</scope>
    <source>
        <strain>DSM 13855 / CECT 5946 / M31</strain>
    </source>
</reference>
<gene>
    <name type="ordered locus">SRU_1937</name>
</gene>
<proteinExistence type="inferred from homology"/>